<keyword id="KW-0119">Carbohydrate metabolism</keyword>
<keyword id="KW-0165">Cleavage on pair of basic residues</keyword>
<keyword id="KW-0903">Direct protein sequencing</keyword>
<keyword id="KW-1015">Disulfide bond</keyword>
<keyword id="KW-0313">Glucose metabolism</keyword>
<keyword id="KW-0372">Hormone</keyword>
<keyword id="KW-1185">Reference proteome</keyword>
<keyword id="KW-0964">Secreted</keyword>
<keyword id="KW-0732">Signal</keyword>
<feature type="signal peptide" evidence="3">
    <location>
        <begin position="1"/>
        <end position="24"/>
    </location>
</feature>
<feature type="peptide" id="PRO_0000015809" description="Insulin B chain">
    <location>
        <begin position="25"/>
        <end position="54"/>
    </location>
</feature>
<feature type="propeptide" id="PRO_0000227016" description="C peptide">
    <location>
        <begin position="57"/>
        <end position="87"/>
    </location>
</feature>
<feature type="peptide" id="PRO_0000015810" description="Insulin A chain">
    <location>
        <begin position="90"/>
        <end position="110"/>
    </location>
</feature>
<feature type="region of interest" description="Disordered" evidence="2">
    <location>
        <begin position="60"/>
        <end position="80"/>
    </location>
</feature>
<feature type="disulfide bond" description="Interchain (between B and A chains)" evidence="1">
    <location>
        <begin position="31"/>
        <end position="96"/>
    </location>
</feature>
<feature type="disulfide bond" description="Interchain (between B and A chains)" evidence="1">
    <location>
        <begin position="43"/>
        <end position="109"/>
    </location>
</feature>
<feature type="disulfide bond" evidence="1">
    <location>
        <begin position="95"/>
        <end position="100"/>
    </location>
</feature>
<comment type="function">
    <text>Insulin decreases blood glucose concentration. It increases cell permeability to monosaccharides, amino acids and fatty acids. It accelerates glycolysis, the pentose phosphate cycle, and glycogen synthesis in liver.</text>
</comment>
<comment type="subunit">
    <text evidence="1">Heterodimer of a B chain and an A chain linked by two disulfide bonds.</text>
</comment>
<comment type="subcellular location">
    <subcellularLocation>
        <location>Secreted</location>
    </subcellularLocation>
</comment>
<comment type="similarity">
    <text evidence="4">Belongs to the insulin family.</text>
</comment>
<evidence type="ECO:0000250" key="1">
    <source>
        <dbReference type="UniProtKB" id="P01308"/>
    </source>
</evidence>
<evidence type="ECO:0000256" key="2">
    <source>
        <dbReference type="SAM" id="MobiDB-lite"/>
    </source>
</evidence>
<evidence type="ECO:0000269" key="3">
    <source>
    </source>
</evidence>
<evidence type="ECO:0000305" key="4"/>
<protein>
    <recommendedName>
        <fullName>Insulin</fullName>
    </recommendedName>
    <component>
        <recommendedName>
            <fullName>Insulin B chain</fullName>
        </recommendedName>
    </component>
    <component>
        <recommendedName>
            <fullName>Insulin A chain</fullName>
        </recommendedName>
    </component>
</protein>
<name>INS_FELCA</name>
<dbReference type="EMBL" id="AB043535">
    <property type="protein sequence ID" value="BAB84110.1"/>
    <property type="molecule type" value="mRNA"/>
</dbReference>
<dbReference type="PIR" id="A01588">
    <property type="entry name" value="INCT"/>
</dbReference>
<dbReference type="RefSeq" id="NP_001009272.1">
    <property type="nucleotide sequence ID" value="NM_001009272.1"/>
</dbReference>
<dbReference type="RefSeq" id="XP_019666739.1">
    <property type="nucleotide sequence ID" value="XM_019811180.2"/>
</dbReference>
<dbReference type="SMR" id="P06306"/>
<dbReference type="FunCoup" id="P06306">
    <property type="interactions" value="82"/>
</dbReference>
<dbReference type="STRING" id="9685.ENSFCAP00000040242"/>
<dbReference type="PaxDb" id="9685-ENSFCAP00000020961"/>
<dbReference type="GeneID" id="493804"/>
<dbReference type="KEGG" id="fca:493804"/>
<dbReference type="CTD" id="3630"/>
<dbReference type="eggNOG" id="ENOG502S5P5">
    <property type="taxonomic scope" value="Eukaryota"/>
</dbReference>
<dbReference type="HOGENOM" id="CLU_140421_1_0_1"/>
<dbReference type="InParanoid" id="P06306"/>
<dbReference type="OrthoDB" id="10019596at2759"/>
<dbReference type="Proteomes" id="UP000011712">
    <property type="component" value="Unplaced"/>
</dbReference>
<dbReference type="GO" id="GO:0005615">
    <property type="term" value="C:extracellular space"/>
    <property type="evidence" value="ECO:0000318"/>
    <property type="project" value="GO_Central"/>
</dbReference>
<dbReference type="GO" id="GO:0005179">
    <property type="term" value="F:hormone activity"/>
    <property type="evidence" value="ECO:0007669"/>
    <property type="project" value="UniProtKB-KW"/>
</dbReference>
<dbReference type="GO" id="GO:1901701">
    <property type="term" value="P:cellular response to oxygen-containing compound"/>
    <property type="evidence" value="ECO:0007669"/>
    <property type="project" value="UniProtKB-ARBA"/>
</dbReference>
<dbReference type="GO" id="GO:0042593">
    <property type="term" value="P:glucose homeostasis"/>
    <property type="evidence" value="ECO:0000318"/>
    <property type="project" value="GO_Central"/>
</dbReference>
<dbReference type="GO" id="GO:0006006">
    <property type="term" value="P:glucose metabolic process"/>
    <property type="evidence" value="ECO:0007669"/>
    <property type="project" value="UniProtKB-KW"/>
</dbReference>
<dbReference type="GO" id="GO:0050714">
    <property type="term" value="P:positive regulation of protein secretion"/>
    <property type="evidence" value="ECO:0000318"/>
    <property type="project" value="GO_Central"/>
</dbReference>
<dbReference type="CDD" id="cd04367">
    <property type="entry name" value="IlGF_insulin_like"/>
    <property type="match status" value="1"/>
</dbReference>
<dbReference type="FunFam" id="1.10.100.10:FF:000003">
    <property type="entry name" value="Insulin"/>
    <property type="match status" value="1"/>
</dbReference>
<dbReference type="Gene3D" id="1.10.100.10">
    <property type="entry name" value="Insulin-like"/>
    <property type="match status" value="1"/>
</dbReference>
<dbReference type="InterPro" id="IPR004825">
    <property type="entry name" value="Insulin"/>
</dbReference>
<dbReference type="InterPro" id="IPR016179">
    <property type="entry name" value="Insulin-like"/>
</dbReference>
<dbReference type="InterPro" id="IPR036438">
    <property type="entry name" value="Insulin-like_sf"/>
</dbReference>
<dbReference type="InterPro" id="IPR022353">
    <property type="entry name" value="Insulin_CS"/>
</dbReference>
<dbReference type="InterPro" id="IPR022352">
    <property type="entry name" value="Insulin_family"/>
</dbReference>
<dbReference type="PANTHER" id="PTHR11454:SF9">
    <property type="entry name" value="INSULIN"/>
    <property type="match status" value="1"/>
</dbReference>
<dbReference type="PANTHER" id="PTHR11454">
    <property type="entry name" value="INSULIN/INSULIN GROWTH FACTOR"/>
    <property type="match status" value="1"/>
</dbReference>
<dbReference type="Pfam" id="PF00049">
    <property type="entry name" value="Insulin"/>
    <property type="match status" value="1"/>
</dbReference>
<dbReference type="PRINTS" id="PR00277">
    <property type="entry name" value="INSULIN"/>
</dbReference>
<dbReference type="PRINTS" id="PR00276">
    <property type="entry name" value="INSULINFAMLY"/>
</dbReference>
<dbReference type="SMART" id="SM00078">
    <property type="entry name" value="IlGF"/>
    <property type="match status" value="1"/>
</dbReference>
<dbReference type="SUPFAM" id="SSF56994">
    <property type="entry name" value="Insulin-like"/>
    <property type="match status" value="1"/>
</dbReference>
<dbReference type="PROSITE" id="PS00262">
    <property type="entry name" value="INSULIN"/>
    <property type="match status" value="1"/>
</dbReference>
<reference key="1">
    <citation type="submission" date="2000-05" db="EMBL/GenBank/DDBJ databases">
        <title>Cat insulin.</title>
        <authorList>
            <person name="Okamoto S."/>
            <person name="Morimatsu M."/>
        </authorList>
    </citation>
    <scope>NUCLEOTIDE SEQUENCE [MRNA]</scope>
    <source>
        <tissue>Pancreas</tissue>
    </source>
</reference>
<reference key="2">
    <citation type="journal article" date="1986" name="Arch. Biochem. Biophys.">
        <title>Characterization of cat insulin.</title>
        <authorList>
            <person name="Hallden G."/>
            <person name="Gafvelin G."/>
            <person name="Mutt V."/>
            <person name="Joernvall H."/>
        </authorList>
    </citation>
    <scope>PROTEIN SEQUENCE OF 25-54 AND 90-110</scope>
</reference>
<sequence>MAPWTRLLPLLALLSLWIPAPTRAFVNQHLCGSHLVEALYLVCGERGFFYTPKARREAEDLQGKDAELGEAPGAGGLQPSALEAPLQKRGIVEQCCASVCSLYQLEHYCN</sequence>
<accession>P06306</accession>
<accession>Q8WNW6</accession>
<gene>
    <name type="primary">INS</name>
</gene>
<proteinExistence type="evidence at protein level"/>
<organism>
    <name type="scientific">Felis catus</name>
    <name type="common">Cat</name>
    <name type="synonym">Felis silvestris catus</name>
    <dbReference type="NCBI Taxonomy" id="9685"/>
    <lineage>
        <taxon>Eukaryota</taxon>
        <taxon>Metazoa</taxon>
        <taxon>Chordata</taxon>
        <taxon>Craniata</taxon>
        <taxon>Vertebrata</taxon>
        <taxon>Euteleostomi</taxon>
        <taxon>Mammalia</taxon>
        <taxon>Eutheria</taxon>
        <taxon>Laurasiatheria</taxon>
        <taxon>Carnivora</taxon>
        <taxon>Feliformia</taxon>
        <taxon>Felidae</taxon>
        <taxon>Felinae</taxon>
        <taxon>Felis</taxon>
    </lineage>
</organism>